<accession>Q8E5U8</accession>
<feature type="chain" id="PRO_0000254387" description="ATP synthase subunit beta">
    <location>
        <begin position="1"/>
        <end position="468"/>
    </location>
</feature>
<feature type="binding site" evidence="1">
    <location>
        <begin position="155"/>
        <end position="162"/>
    </location>
    <ligand>
        <name>ATP</name>
        <dbReference type="ChEBI" id="CHEBI:30616"/>
    </ligand>
</feature>
<reference key="1">
    <citation type="journal article" date="2002" name="Mol. Microbiol.">
        <title>Genome sequence of Streptococcus agalactiae, a pathogen causing invasive neonatal disease.</title>
        <authorList>
            <person name="Glaser P."/>
            <person name="Rusniok C."/>
            <person name="Buchrieser C."/>
            <person name="Chevalier F."/>
            <person name="Frangeul L."/>
            <person name="Msadek T."/>
            <person name="Zouine M."/>
            <person name="Couve E."/>
            <person name="Lalioui L."/>
            <person name="Poyart C."/>
            <person name="Trieu-Cuot P."/>
            <person name="Kunst F."/>
        </authorList>
    </citation>
    <scope>NUCLEOTIDE SEQUENCE [LARGE SCALE GENOMIC DNA]</scope>
    <source>
        <strain>NEM316</strain>
    </source>
</reference>
<name>ATPB_STRA3</name>
<evidence type="ECO:0000255" key="1">
    <source>
        <dbReference type="HAMAP-Rule" id="MF_01347"/>
    </source>
</evidence>
<organism>
    <name type="scientific">Streptococcus agalactiae serotype III (strain NEM316)</name>
    <dbReference type="NCBI Taxonomy" id="211110"/>
    <lineage>
        <taxon>Bacteria</taxon>
        <taxon>Bacillati</taxon>
        <taxon>Bacillota</taxon>
        <taxon>Bacilli</taxon>
        <taxon>Lactobacillales</taxon>
        <taxon>Streptococcaceae</taxon>
        <taxon>Streptococcus</taxon>
    </lineage>
</organism>
<sequence length="468" mass="50974">MSSGKIAQVVGPVVDVVFASGDKLPEINNALIVYKNGDKSQKVVLEVTLELGDGLVRTIAMESTDGLTRGLEVLDTGRAISVPVGKDTLGRVFNVLGDAIDLEEPFAEDAERQPIHKKAPSFDELSTSSEILETGIKVIDLLAPYLKGGKVGLFGGAGVGKTVLIQELIHNIAQEHGGISVFTGVGERTREGNDLYWEMKESGVIEKTAMVFGQMNEPPGARMRVALTGLTIAEYFRDVEGQDVLLFIDNIFRFTQAGSEVSALLGRMPSAVGYQPTLATEMGQLQERITSTKKGSVTSIQAIYVPADDYTDPAPATAFAHLDSTTNLERKLTQMGIYPAVDPLASSSRALTPEIVGDEHYEVATEVQRVLQRYRELQDIIAILGMDELSDEEKTLVGRARRIQFFLSQNFNVAETFTGQPGSYVPVEETVRGFKEILDGKHDQIPEDAFRMVGGIEDVIAKAEKMNY</sequence>
<comment type="function">
    <text evidence="1">Produces ATP from ADP in the presence of a proton gradient across the membrane. The catalytic sites are hosted primarily by the beta subunits.</text>
</comment>
<comment type="catalytic activity">
    <reaction evidence="1">
        <text>ATP + H2O + 4 H(+)(in) = ADP + phosphate + 5 H(+)(out)</text>
        <dbReference type="Rhea" id="RHEA:57720"/>
        <dbReference type="ChEBI" id="CHEBI:15377"/>
        <dbReference type="ChEBI" id="CHEBI:15378"/>
        <dbReference type="ChEBI" id="CHEBI:30616"/>
        <dbReference type="ChEBI" id="CHEBI:43474"/>
        <dbReference type="ChEBI" id="CHEBI:456216"/>
        <dbReference type="EC" id="7.1.2.2"/>
    </reaction>
</comment>
<comment type="subunit">
    <text evidence="1">F-type ATPases have 2 components, CF(1) - the catalytic core - and CF(0) - the membrane proton channel. CF(1) has five subunits: alpha(3), beta(3), gamma(1), delta(1), epsilon(1). CF(0) has three main subunits: a(1), b(2) and c(9-12). The alpha and beta chains form an alternating ring which encloses part of the gamma chain. CF(1) is attached to CF(0) by a central stalk formed by the gamma and epsilon chains, while a peripheral stalk is formed by the delta and b chains.</text>
</comment>
<comment type="subcellular location">
    <subcellularLocation>
        <location evidence="1">Cell membrane</location>
        <topology evidence="1">Peripheral membrane protein</topology>
    </subcellularLocation>
</comment>
<comment type="similarity">
    <text evidence="1">Belongs to the ATPase alpha/beta chains family.</text>
</comment>
<gene>
    <name evidence="1" type="primary">atpD</name>
    <name type="ordered locus">gbs0881</name>
</gene>
<keyword id="KW-0066">ATP synthesis</keyword>
<keyword id="KW-0067">ATP-binding</keyword>
<keyword id="KW-1003">Cell membrane</keyword>
<keyword id="KW-0139">CF(1)</keyword>
<keyword id="KW-0375">Hydrogen ion transport</keyword>
<keyword id="KW-0406">Ion transport</keyword>
<keyword id="KW-0472">Membrane</keyword>
<keyword id="KW-0547">Nucleotide-binding</keyword>
<keyword id="KW-1278">Translocase</keyword>
<keyword id="KW-0813">Transport</keyword>
<protein>
    <recommendedName>
        <fullName evidence="1">ATP synthase subunit beta</fullName>
        <ecNumber evidence="1">7.1.2.2</ecNumber>
    </recommendedName>
    <alternativeName>
        <fullName evidence="1">ATP synthase F1 sector subunit beta</fullName>
    </alternativeName>
    <alternativeName>
        <fullName evidence="1">F-ATPase subunit beta</fullName>
    </alternativeName>
</protein>
<dbReference type="EC" id="7.1.2.2" evidence="1"/>
<dbReference type="EMBL" id="AL766847">
    <property type="protein sequence ID" value="CAD46525.1"/>
    <property type="molecule type" value="Genomic_DNA"/>
</dbReference>
<dbReference type="RefSeq" id="WP_000094377.1">
    <property type="nucleotide sequence ID" value="NC_004368.1"/>
</dbReference>
<dbReference type="SMR" id="Q8E5U8"/>
<dbReference type="KEGG" id="san:atpD"/>
<dbReference type="eggNOG" id="COG0055">
    <property type="taxonomic scope" value="Bacteria"/>
</dbReference>
<dbReference type="HOGENOM" id="CLU_022398_0_2_9"/>
<dbReference type="Proteomes" id="UP000000823">
    <property type="component" value="Chromosome"/>
</dbReference>
<dbReference type="GO" id="GO:0005886">
    <property type="term" value="C:plasma membrane"/>
    <property type="evidence" value="ECO:0007669"/>
    <property type="project" value="UniProtKB-SubCell"/>
</dbReference>
<dbReference type="GO" id="GO:0045259">
    <property type="term" value="C:proton-transporting ATP synthase complex"/>
    <property type="evidence" value="ECO:0007669"/>
    <property type="project" value="UniProtKB-KW"/>
</dbReference>
<dbReference type="GO" id="GO:0005524">
    <property type="term" value="F:ATP binding"/>
    <property type="evidence" value="ECO:0007669"/>
    <property type="project" value="UniProtKB-UniRule"/>
</dbReference>
<dbReference type="GO" id="GO:0016887">
    <property type="term" value="F:ATP hydrolysis activity"/>
    <property type="evidence" value="ECO:0007669"/>
    <property type="project" value="InterPro"/>
</dbReference>
<dbReference type="GO" id="GO:0046933">
    <property type="term" value="F:proton-transporting ATP synthase activity, rotational mechanism"/>
    <property type="evidence" value="ECO:0007669"/>
    <property type="project" value="UniProtKB-UniRule"/>
</dbReference>
<dbReference type="CDD" id="cd18110">
    <property type="entry name" value="ATP-synt_F1_beta_C"/>
    <property type="match status" value="1"/>
</dbReference>
<dbReference type="CDD" id="cd18115">
    <property type="entry name" value="ATP-synt_F1_beta_N"/>
    <property type="match status" value="1"/>
</dbReference>
<dbReference type="CDD" id="cd01133">
    <property type="entry name" value="F1-ATPase_beta_CD"/>
    <property type="match status" value="1"/>
</dbReference>
<dbReference type="FunFam" id="1.10.1140.10:FF:000001">
    <property type="entry name" value="ATP synthase subunit beta"/>
    <property type="match status" value="1"/>
</dbReference>
<dbReference type="FunFam" id="2.40.10.170:FF:000005">
    <property type="entry name" value="ATP synthase subunit beta"/>
    <property type="match status" value="1"/>
</dbReference>
<dbReference type="FunFam" id="3.40.50.300:FF:000004">
    <property type="entry name" value="ATP synthase subunit beta"/>
    <property type="match status" value="1"/>
</dbReference>
<dbReference type="Gene3D" id="2.40.10.170">
    <property type="match status" value="1"/>
</dbReference>
<dbReference type="Gene3D" id="1.10.1140.10">
    <property type="entry name" value="Bovine Mitochondrial F1-atpase, Atp Synthase Beta Chain, Chain D, domain 3"/>
    <property type="match status" value="1"/>
</dbReference>
<dbReference type="Gene3D" id="3.40.50.300">
    <property type="entry name" value="P-loop containing nucleotide triphosphate hydrolases"/>
    <property type="match status" value="1"/>
</dbReference>
<dbReference type="HAMAP" id="MF_01347">
    <property type="entry name" value="ATP_synth_beta_bact"/>
    <property type="match status" value="1"/>
</dbReference>
<dbReference type="InterPro" id="IPR003593">
    <property type="entry name" value="AAA+_ATPase"/>
</dbReference>
<dbReference type="InterPro" id="IPR055190">
    <property type="entry name" value="ATP-synt_VA_C"/>
</dbReference>
<dbReference type="InterPro" id="IPR005722">
    <property type="entry name" value="ATP_synth_F1_bsu"/>
</dbReference>
<dbReference type="InterPro" id="IPR020003">
    <property type="entry name" value="ATPase_a/bsu_AS"/>
</dbReference>
<dbReference type="InterPro" id="IPR050053">
    <property type="entry name" value="ATPase_alpha/beta_chains"/>
</dbReference>
<dbReference type="InterPro" id="IPR004100">
    <property type="entry name" value="ATPase_F1/V1/A1_a/bsu_N"/>
</dbReference>
<dbReference type="InterPro" id="IPR036121">
    <property type="entry name" value="ATPase_F1/V1/A1_a/bsu_N_sf"/>
</dbReference>
<dbReference type="InterPro" id="IPR000194">
    <property type="entry name" value="ATPase_F1/V1/A1_a/bsu_nucl-bd"/>
</dbReference>
<dbReference type="InterPro" id="IPR024034">
    <property type="entry name" value="ATPase_F1/V1_b/a_C"/>
</dbReference>
<dbReference type="InterPro" id="IPR027417">
    <property type="entry name" value="P-loop_NTPase"/>
</dbReference>
<dbReference type="NCBIfam" id="TIGR01039">
    <property type="entry name" value="atpD"/>
    <property type="match status" value="1"/>
</dbReference>
<dbReference type="PANTHER" id="PTHR15184">
    <property type="entry name" value="ATP SYNTHASE"/>
    <property type="match status" value="1"/>
</dbReference>
<dbReference type="PANTHER" id="PTHR15184:SF71">
    <property type="entry name" value="ATP SYNTHASE SUBUNIT BETA, MITOCHONDRIAL"/>
    <property type="match status" value="1"/>
</dbReference>
<dbReference type="Pfam" id="PF00006">
    <property type="entry name" value="ATP-synt_ab"/>
    <property type="match status" value="1"/>
</dbReference>
<dbReference type="Pfam" id="PF02874">
    <property type="entry name" value="ATP-synt_ab_N"/>
    <property type="match status" value="1"/>
</dbReference>
<dbReference type="Pfam" id="PF22919">
    <property type="entry name" value="ATP-synt_VA_C"/>
    <property type="match status" value="1"/>
</dbReference>
<dbReference type="SMART" id="SM00382">
    <property type="entry name" value="AAA"/>
    <property type="match status" value="1"/>
</dbReference>
<dbReference type="SUPFAM" id="SSF47917">
    <property type="entry name" value="C-terminal domain of alpha and beta subunits of F1 ATP synthase"/>
    <property type="match status" value="1"/>
</dbReference>
<dbReference type="SUPFAM" id="SSF50615">
    <property type="entry name" value="N-terminal domain of alpha and beta subunits of F1 ATP synthase"/>
    <property type="match status" value="1"/>
</dbReference>
<dbReference type="SUPFAM" id="SSF52540">
    <property type="entry name" value="P-loop containing nucleoside triphosphate hydrolases"/>
    <property type="match status" value="1"/>
</dbReference>
<dbReference type="PROSITE" id="PS00152">
    <property type="entry name" value="ATPASE_ALPHA_BETA"/>
    <property type="match status" value="1"/>
</dbReference>
<proteinExistence type="inferred from homology"/>